<comment type="subcellular location">
    <subcellularLocation>
        <location evidence="1">Secreted</location>
    </subcellularLocation>
</comment>
<comment type="tissue specificity">
    <text>Expressed by the venom gland.</text>
</comment>
<comment type="PTM">
    <text evidence="1">Contains 4 disulfide bonds.</text>
</comment>
<comment type="similarity">
    <text evidence="3">Belongs to the scorpion La1-like peptide family.</text>
</comment>
<dbReference type="EMBL" id="DQ352540">
    <property type="protein sequence ID" value="ABC86160.1"/>
    <property type="molecule type" value="mRNA"/>
</dbReference>
<dbReference type="EMBL" id="EF063687">
    <property type="protein sequence ID" value="ABN04116.1"/>
    <property type="molecule type" value="mRNA"/>
</dbReference>
<dbReference type="EMBL" id="JQ821371">
    <property type="protein sequence ID" value="AFR60583.1"/>
    <property type="molecule type" value="mRNA"/>
</dbReference>
<dbReference type="EMBL" id="AF155366">
    <property type="protein sequence ID" value="AAK61816.1"/>
    <property type="molecule type" value="mRNA"/>
</dbReference>
<dbReference type="GO" id="GO:0005576">
    <property type="term" value="C:extracellular region"/>
    <property type="evidence" value="ECO:0007669"/>
    <property type="project" value="UniProtKB-SubCell"/>
</dbReference>
<dbReference type="GO" id="GO:0090729">
    <property type="term" value="F:toxin activity"/>
    <property type="evidence" value="ECO:0007669"/>
    <property type="project" value="UniProtKB-KW"/>
</dbReference>
<dbReference type="InterPro" id="IPR029277">
    <property type="entry name" value="SVWC_dom"/>
</dbReference>
<dbReference type="Pfam" id="PF15430">
    <property type="entry name" value="SVWC"/>
    <property type="match status" value="1"/>
</dbReference>
<dbReference type="SMART" id="SM01318">
    <property type="entry name" value="SVWC"/>
    <property type="match status" value="1"/>
</dbReference>
<keyword id="KW-1015">Disulfide bond</keyword>
<keyword id="KW-0964">Secreted</keyword>
<keyword id="KW-0732">Signal</keyword>
<keyword id="KW-0800">Toxin</keyword>
<name>LA1_OLIMR</name>
<feature type="signal peptide" evidence="2">
    <location>
        <begin position="1"/>
        <end position="21"/>
    </location>
</feature>
<feature type="chain" id="PRO_0000428817" description="Venom peptide MmKTx1">
    <location>
        <begin position="22"/>
        <end position="123"/>
    </location>
</feature>
<evidence type="ECO:0000250" key="1"/>
<evidence type="ECO:0000255" key="2"/>
<evidence type="ECO:0000305" key="3"/>
<proteinExistence type="evidence at transcript level"/>
<sequence>MSIKISAIALFMLSFTVFVNGIPFFLTKGRIDTCKTLTGETIKIGESWHDPNSCSVYYCEVNSLGAMLIGKTCATVFYPSNCREEPGTGLYPDCCNKVVCGEEEMVVYPYEERSLRRYYFSKF</sequence>
<protein>
    <recommendedName>
        <fullName>Venom peptide MmKTx1</fullName>
    </recommendedName>
    <alternativeName>
        <fullName>BmTXLP1</fullName>
    </alternativeName>
    <alternativeName>
        <fullName>BmTXLP4</fullName>
    </alternativeName>
</protein>
<reference key="1">
    <citation type="journal article" date="2013" name="Peptides">
        <title>Molecular and bioinformatical characterization of a novel superfamily of cysteine-rich peptides from arthropods.</title>
        <authorList>
            <person name="Zeng X.C."/>
            <person name="Nie Y."/>
            <person name="Luo X."/>
            <person name="Wu S."/>
            <person name="Shi W."/>
            <person name="Zhang L."/>
            <person name="Liu Y."/>
            <person name="Cao H."/>
            <person name="Yang Y."/>
            <person name="Zhou J."/>
        </authorList>
    </citation>
    <scope>NUCLEOTIDE SEQUENCE [MRNA]</scope>
    <source>
        <tissue>Venom gland</tissue>
    </source>
</reference>
<reference key="2">
    <citation type="submission" date="1999-06" db="EMBL/GenBank/DDBJ databases">
        <authorList>
            <person name="Zhu S."/>
            <person name="Li W."/>
        </authorList>
    </citation>
    <scope>NUCLEOTIDE SEQUENCE [MRNA] OF 48-123</scope>
    <source>
        <tissue>Venom gland</tissue>
    </source>
</reference>
<accession>D2CFI7</accession>
<accession>Q95P92</accession>
<organism>
    <name type="scientific">Olivierus martensii</name>
    <name type="common">Manchurian scorpion</name>
    <name type="synonym">Mesobuthus martensii</name>
    <dbReference type="NCBI Taxonomy" id="34649"/>
    <lineage>
        <taxon>Eukaryota</taxon>
        <taxon>Metazoa</taxon>
        <taxon>Ecdysozoa</taxon>
        <taxon>Arthropoda</taxon>
        <taxon>Chelicerata</taxon>
        <taxon>Arachnida</taxon>
        <taxon>Scorpiones</taxon>
        <taxon>Buthida</taxon>
        <taxon>Buthoidea</taxon>
        <taxon>Buthidae</taxon>
        <taxon>Olivierus</taxon>
    </lineage>
</organism>